<protein>
    <recommendedName>
        <fullName evidence="2">Valine dehydrogenase</fullName>
        <shortName>ValDH</shortName>
        <ecNumber evidence="2">1.4.1.23</ecNumber>
    </recommendedName>
</protein>
<keyword id="KW-0101">Branched-chain amino acid catabolism</keyword>
<keyword id="KW-0963">Cytoplasm</keyword>
<keyword id="KW-0520">NAD</keyword>
<keyword id="KW-0560">Oxidoreductase</keyword>
<evidence type="ECO:0000250" key="1"/>
<evidence type="ECO:0000250" key="2">
    <source>
        <dbReference type="UniProtKB" id="Q06539"/>
    </source>
</evidence>
<evidence type="ECO:0000255" key="3">
    <source>
        <dbReference type="PROSITE-ProRule" id="PRU10011"/>
    </source>
</evidence>
<evidence type="ECO:0000305" key="4"/>
<organism>
    <name type="scientific">Streptomyces ambofaciens</name>
    <dbReference type="NCBI Taxonomy" id="1889"/>
    <lineage>
        <taxon>Bacteria</taxon>
        <taxon>Bacillati</taxon>
        <taxon>Actinomycetota</taxon>
        <taxon>Actinomycetes</taxon>
        <taxon>Kitasatosporales</taxon>
        <taxon>Streptomycetaceae</taxon>
        <taxon>Streptomyces</taxon>
    </lineage>
</organism>
<proteinExistence type="inferred from homology"/>
<sequence length="106" mass="10964">MTDVTGAPADVLHTLFHSDQGGHEQVVLCQDRASGLKAVIALHSTALGPALGGTRFYPIANEAEAVADALNLARGMSYKNAMAGLEHGGGKAVIIGDPEQIKSEEL</sequence>
<accession>P42709</accession>
<name>VDH_STRAM</name>
<gene>
    <name type="primary">vdh</name>
</gene>
<reference key="1">
    <citation type="journal article" date="1994" name="J. Bacteriol.">
        <title>Amino acid catabolism and antibiotic synthesis: valine is a source of precursors for macrolide biosynthesis in Streptomyces ambofaciens and Streptomyces fradiae.</title>
        <authorList>
            <person name="Tang L."/>
            <person name="Zhang Y.X."/>
            <person name="Hutchinson C.R."/>
        </authorList>
    </citation>
    <scope>NUCLEOTIDE SEQUENCE [GENOMIC DNA]</scope>
    <source>
        <strain>ATCC 15154 / NBRC 13685 / NRRL 2420 / Isolate B3</strain>
    </source>
</reference>
<comment type="function">
    <text evidence="2">Oxidative deamination of branched-chain amino acids. The catabolism of valine is the major source of fatty acid precursors for macrolide biosynthesis and a vital source of antibiotic precursors.</text>
</comment>
<comment type="catalytic activity">
    <reaction evidence="2">
        <text>L-valine + NAD(+) + H2O = 3-methyl-2-oxobutanoate + NH4(+) + NADH + H(+)</text>
        <dbReference type="Rhea" id="RHEA:30763"/>
        <dbReference type="ChEBI" id="CHEBI:11851"/>
        <dbReference type="ChEBI" id="CHEBI:15377"/>
        <dbReference type="ChEBI" id="CHEBI:15378"/>
        <dbReference type="ChEBI" id="CHEBI:28938"/>
        <dbReference type="ChEBI" id="CHEBI:57540"/>
        <dbReference type="ChEBI" id="CHEBI:57762"/>
        <dbReference type="ChEBI" id="CHEBI:57945"/>
        <dbReference type="EC" id="1.4.1.23"/>
    </reaction>
</comment>
<comment type="pathway">
    <text evidence="2">Amino-acid degradation; L-valine degradation.</text>
</comment>
<comment type="subunit">
    <text evidence="2">Homodimer.</text>
</comment>
<comment type="subcellular location">
    <subcellularLocation>
        <location evidence="1">Cytoplasm</location>
    </subcellularLocation>
</comment>
<comment type="similarity">
    <text evidence="4">Belongs to the Glu/Leu/Phe/Val dehydrogenases family.</text>
</comment>
<dbReference type="EC" id="1.4.1.23" evidence="2"/>
<dbReference type="EMBL" id="L33871">
    <property type="protein sequence ID" value="AAA62597.1"/>
    <property type="molecule type" value="Genomic_DNA"/>
</dbReference>
<dbReference type="SMR" id="P42709"/>
<dbReference type="UniPathway" id="UPA00362"/>
<dbReference type="GO" id="GO:0005737">
    <property type="term" value="C:cytoplasm"/>
    <property type="evidence" value="ECO:0007669"/>
    <property type="project" value="UniProtKB-SubCell"/>
</dbReference>
<dbReference type="GO" id="GO:0043837">
    <property type="term" value="F:valine dehydrogenase (NAD+) activity"/>
    <property type="evidence" value="ECO:0007669"/>
    <property type="project" value="UniProtKB-EC"/>
</dbReference>
<dbReference type="GO" id="GO:0006574">
    <property type="term" value="P:valine catabolic process"/>
    <property type="evidence" value="ECO:0007669"/>
    <property type="project" value="UniProtKB-UniPathway"/>
</dbReference>
<dbReference type="Gene3D" id="3.40.50.10860">
    <property type="entry name" value="Leucine Dehydrogenase, chain A, domain 1"/>
    <property type="match status" value="1"/>
</dbReference>
<dbReference type="InterPro" id="IPR046346">
    <property type="entry name" value="Aminoacid_DH-like_N_sf"/>
</dbReference>
<dbReference type="InterPro" id="IPR006097">
    <property type="entry name" value="Glu/Leu/Phe/Val/Trp_DH_dimer"/>
</dbReference>
<dbReference type="InterPro" id="IPR033524">
    <property type="entry name" value="Glu/Leu/Phe/Val_DH_AS"/>
</dbReference>
<dbReference type="InterPro" id="IPR016211">
    <property type="entry name" value="Glu/Phe/Leu/Val/Trp_DH_bac/arc"/>
</dbReference>
<dbReference type="PANTHER" id="PTHR42722">
    <property type="entry name" value="LEUCINE DEHYDROGENASE"/>
    <property type="match status" value="1"/>
</dbReference>
<dbReference type="PANTHER" id="PTHR42722:SF1">
    <property type="entry name" value="VALINE DEHYDROGENASE"/>
    <property type="match status" value="1"/>
</dbReference>
<dbReference type="Pfam" id="PF02812">
    <property type="entry name" value="ELFV_dehydrog_N"/>
    <property type="match status" value="1"/>
</dbReference>
<dbReference type="SUPFAM" id="SSF53223">
    <property type="entry name" value="Aminoacid dehydrogenase-like, N-terminal domain"/>
    <property type="match status" value="1"/>
</dbReference>
<dbReference type="PROSITE" id="PS00074">
    <property type="entry name" value="GLFV_DEHYDROGENASE"/>
    <property type="match status" value="1"/>
</dbReference>
<feature type="initiator methionine" description="Removed" evidence="1">
    <location>
        <position position="1"/>
    </location>
</feature>
<feature type="chain" id="PRO_0000182811" description="Valine dehydrogenase">
    <location>
        <begin position="2"/>
        <end position="106" status="greater than"/>
    </location>
</feature>
<feature type="active site" evidence="3">
    <location>
        <position position="91"/>
    </location>
</feature>
<feature type="non-terminal residue">
    <location>
        <position position="106"/>
    </location>
</feature>